<sequence length="379" mass="42551">MDPMESSSEQDIVEESQKLVDSLDKLRVSAASSSSNFKKKPIIIIVVGMAGSGKTSFLHRLVCHTFDSKSHGYVVNLDPAVMSLPFGANIDIRDTVKYKEVMKQYNLGPNGGILTSLNLFATKFDEVVSVIEKRADQLDYVLVDTPGQIEIFTWSASGAIITEAFASTFPTVVTYVVDTPRSSSPITFMSNMLYACSILYKTRLPLVLAFNKTDVADHKFALEWMEDFEVFQAAIQSDNSYTATLANSLSLSLYEFYRNIRSVGVSAISGAGMDGFFKAIEASAEEYMETYKADLDMRKADKERLEEERKKHEMEKLRKDMESSQGGTVVLNTGLKDRDATEKMMLEEDDEDFQVEDEEDSDDAIDEDDEDDETKHYYL</sequence>
<dbReference type="EC" id="3.6.5.-" evidence="6"/>
<dbReference type="EMBL" id="AL021890">
    <property type="protein sequence ID" value="CAA17147.1"/>
    <property type="molecule type" value="Genomic_DNA"/>
</dbReference>
<dbReference type="EMBL" id="AL035527">
    <property type="protein sequence ID" value="CAB36824.1"/>
    <property type="status" value="ALT_SEQ"/>
    <property type="molecule type" value="Genomic_DNA"/>
</dbReference>
<dbReference type="EMBL" id="AL161555">
    <property type="protein sequence ID" value="CAB81287.1"/>
    <property type="status" value="ALT_SEQ"/>
    <property type="molecule type" value="Genomic_DNA"/>
</dbReference>
<dbReference type="EMBL" id="CP002687">
    <property type="protein sequence ID" value="AEE84504.1"/>
    <property type="molecule type" value="Genomic_DNA"/>
</dbReference>
<dbReference type="EMBL" id="CP002687">
    <property type="protein sequence ID" value="AEE84505.1"/>
    <property type="molecule type" value="Genomic_DNA"/>
</dbReference>
<dbReference type="EMBL" id="AF419563">
    <property type="protein sequence ID" value="AAL31895.1"/>
    <property type="molecule type" value="mRNA"/>
</dbReference>
<dbReference type="EMBL" id="AY143879">
    <property type="protein sequence ID" value="AAN28818.1"/>
    <property type="molecule type" value="mRNA"/>
</dbReference>
<dbReference type="EMBL" id="AY088472">
    <property type="protein sequence ID" value="AAM66008.1"/>
    <property type="molecule type" value="mRNA"/>
</dbReference>
<dbReference type="PIR" id="A85249">
    <property type="entry name" value="A85249"/>
</dbReference>
<dbReference type="PIR" id="T05462">
    <property type="entry name" value="T05462"/>
</dbReference>
<dbReference type="RefSeq" id="NP_193911.1">
    <property type="nucleotide sequence ID" value="NM_118300.3"/>
</dbReference>
<dbReference type="RefSeq" id="NP_974586.1">
    <property type="nucleotide sequence ID" value="NM_202857.2"/>
</dbReference>
<dbReference type="SMR" id="Q8W586"/>
<dbReference type="FunCoup" id="Q8W586">
    <property type="interactions" value="3797"/>
</dbReference>
<dbReference type="IntAct" id="Q8W586">
    <property type="interactions" value="1"/>
</dbReference>
<dbReference type="STRING" id="3702.Q8W586"/>
<dbReference type="iPTMnet" id="Q8W586"/>
<dbReference type="PaxDb" id="3702-AT4G21800.2"/>
<dbReference type="ProteomicsDB" id="226143"/>
<dbReference type="EnsemblPlants" id="AT4G21800.1">
    <property type="protein sequence ID" value="AT4G21800.1"/>
    <property type="gene ID" value="AT4G21800"/>
</dbReference>
<dbReference type="EnsemblPlants" id="AT4G21800.2">
    <property type="protein sequence ID" value="AT4G21800.2"/>
    <property type="gene ID" value="AT4G21800"/>
</dbReference>
<dbReference type="GeneID" id="828268"/>
<dbReference type="Gramene" id="AT4G21800.1">
    <property type="protein sequence ID" value="AT4G21800.1"/>
    <property type="gene ID" value="AT4G21800"/>
</dbReference>
<dbReference type="Gramene" id="AT4G21800.2">
    <property type="protein sequence ID" value="AT4G21800.2"/>
    <property type="gene ID" value="AT4G21800"/>
</dbReference>
<dbReference type="KEGG" id="ath:AT4G21800"/>
<dbReference type="Araport" id="AT4G21800"/>
<dbReference type="TAIR" id="AT4G21800">
    <property type="gene designation" value="QQT2"/>
</dbReference>
<dbReference type="eggNOG" id="KOG1532">
    <property type="taxonomic scope" value="Eukaryota"/>
</dbReference>
<dbReference type="HOGENOM" id="CLU_037460_1_1_1"/>
<dbReference type="InParanoid" id="Q8W586"/>
<dbReference type="OMA" id="MIIVFNK"/>
<dbReference type="PhylomeDB" id="Q8W586"/>
<dbReference type="PRO" id="PR:Q8W586"/>
<dbReference type="Proteomes" id="UP000006548">
    <property type="component" value="Chromosome 4"/>
</dbReference>
<dbReference type="ExpressionAtlas" id="Q8W586">
    <property type="expression patterns" value="baseline and differential"/>
</dbReference>
<dbReference type="GO" id="GO:0005874">
    <property type="term" value="C:microtubule"/>
    <property type="evidence" value="ECO:0000314"/>
    <property type="project" value="TAIR"/>
</dbReference>
<dbReference type="GO" id="GO:0005634">
    <property type="term" value="C:nucleus"/>
    <property type="evidence" value="ECO:0007669"/>
    <property type="project" value="UniProtKB-SubCell"/>
</dbReference>
<dbReference type="GO" id="GO:0009524">
    <property type="term" value="C:phragmoplast"/>
    <property type="evidence" value="ECO:0007669"/>
    <property type="project" value="UniProtKB-SubCell"/>
</dbReference>
<dbReference type="GO" id="GO:0005819">
    <property type="term" value="C:spindle"/>
    <property type="evidence" value="ECO:0007669"/>
    <property type="project" value="UniProtKB-SubCell"/>
</dbReference>
<dbReference type="GO" id="GO:0005525">
    <property type="term" value="F:GTP binding"/>
    <property type="evidence" value="ECO:0007669"/>
    <property type="project" value="UniProtKB-KW"/>
</dbReference>
<dbReference type="GO" id="GO:0003924">
    <property type="term" value="F:GTPase activity"/>
    <property type="evidence" value="ECO:0007669"/>
    <property type="project" value="InterPro"/>
</dbReference>
<dbReference type="GO" id="GO:0051301">
    <property type="term" value="P:cell division"/>
    <property type="evidence" value="ECO:0000315"/>
    <property type="project" value="TAIR"/>
</dbReference>
<dbReference type="GO" id="GO:0009793">
    <property type="term" value="P:embryo development ending in seed dormancy"/>
    <property type="evidence" value="ECO:0000315"/>
    <property type="project" value="TAIR"/>
</dbReference>
<dbReference type="CDD" id="cd17870">
    <property type="entry name" value="GPN1"/>
    <property type="match status" value="1"/>
</dbReference>
<dbReference type="FunFam" id="3.40.50.300:FF:000817">
    <property type="entry name" value="GPN-loop GTPase 1"/>
    <property type="match status" value="1"/>
</dbReference>
<dbReference type="Gene3D" id="3.40.50.300">
    <property type="entry name" value="P-loop containing nucleotide triphosphate hydrolases"/>
    <property type="match status" value="1"/>
</dbReference>
<dbReference type="InterPro" id="IPR004130">
    <property type="entry name" value="Gpn"/>
</dbReference>
<dbReference type="InterPro" id="IPR030230">
    <property type="entry name" value="Gpn1/Npa3/XAB1"/>
</dbReference>
<dbReference type="InterPro" id="IPR027417">
    <property type="entry name" value="P-loop_NTPase"/>
</dbReference>
<dbReference type="PANTHER" id="PTHR21231:SF8">
    <property type="entry name" value="GPN-LOOP GTPASE 1"/>
    <property type="match status" value="1"/>
</dbReference>
<dbReference type="PANTHER" id="PTHR21231">
    <property type="entry name" value="XPA-BINDING PROTEIN 1-RELATED"/>
    <property type="match status" value="1"/>
</dbReference>
<dbReference type="Pfam" id="PF03029">
    <property type="entry name" value="ATP_bind_1"/>
    <property type="match status" value="1"/>
</dbReference>
<dbReference type="SUPFAM" id="SSF52540">
    <property type="entry name" value="P-loop containing nucleoside triphosphate hydrolases"/>
    <property type="match status" value="1"/>
</dbReference>
<feature type="chain" id="PRO_0000443287" description="GPN-loop GTPase QQT2">
    <location>
        <begin position="1"/>
        <end position="379"/>
    </location>
</feature>
<feature type="region of interest" description="Disordered" evidence="3">
    <location>
        <begin position="303"/>
        <end position="379"/>
    </location>
</feature>
<feature type="coiled-coil region" evidence="2">
    <location>
        <begin position="288"/>
        <end position="322"/>
    </location>
</feature>
<feature type="short sequence motif" description="Gly-Pro-Asn (GPN)-loop; involved in dimer interface" evidence="1">
    <location>
        <begin position="108"/>
        <end position="110"/>
    </location>
</feature>
<feature type="compositionally biased region" description="Basic and acidic residues" evidence="3">
    <location>
        <begin position="303"/>
        <end position="322"/>
    </location>
</feature>
<feature type="compositionally biased region" description="Basic and acidic residues" evidence="3">
    <location>
        <begin position="335"/>
        <end position="346"/>
    </location>
</feature>
<feature type="compositionally biased region" description="Acidic residues" evidence="3">
    <location>
        <begin position="347"/>
        <end position="372"/>
    </location>
</feature>
<feature type="binding site" evidence="1">
    <location>
        <begin position="51"/>
        <end position="56"/>
    </location>
    <ligand>
        <name>GTP</name>
        <dbReference type="ChEBI" id="CHEBI:37565"/>
    </ligand>
</feature>
<feature type="binding site" evidence="1">
    <location>
        <begin position="211"/>
        <end position="214"/>
    </location>
    <ligand>
        <name>GTP</name>
        <dbReference type="ChEBI" id="CHEBI:37565"/>
    </ligand>
</feature>
<feature type="binding site" evidence="1">
    <location>
        <position position="267"/>
    </location>
    <ligand>
        <name>GTP</name>
        <dbReference type="ChEBI" id="CHEBI:37565"/>
    </ligand>
</feature>
<feature type="site" description="Stabilizes the phosphate intermediate; shared with dimeric partner" evidence="1">
    <location>
        <position position="110"/>
    </location>
</feature>
<feature type="modified residue" description="N-acetylmethionine" evidence="11">
    <location>
        <position position="1"/>
    </location>
</feature>
<organism>
    <name type="scientific">Arabidopsis thaliana</name>
    <name type="common">Mouse-ear cress</name>
    <dbReference type="NCBI Taxonomy" id="3702"/>
    <lineage>
        <taxon>Eukaryota</taxon>
        <taxon>Viridiplantae</taxon>
        <taxon>Streptophyta</taxon>
        <taxon>Embryophyta</taxon>
        <taxon>Tracheophyta</taxon>
        <taxon>Spermatophyta</taxon>
        <taxon>Magnoliopsida</taxon>
        <taxon>eudicotyledons</taxon>
        <taxon>Gunneridae</taxon>
        <taxon>Pentapetalae</taxon>
        <taxon>rosids</taxon>
        <taxon>malvids</taxon>
        <taxon>Brassicales</taxon>
        <taxon>Brassicaceae</taxon>
        <taxon>Camelineae</taxon>
        <taxon>Arabidopsis</taxon>
    </lineage>
</organism>
<keyword id="KW-0007">Acetylation</keyword>
<keyword id="KW-0175">Coiled coil</keyword>
<keyword id="KW-0963">Cytoplasm</keyword>
<keyword id="KW-0206">Cytoskeleton</keyword>
<keyword id="KW-0342">GTP-binding</keyword>
<keyword id="KW-0378">Hydrolase</keyword>
<keyword id="KW-0547">Nucleotide-binding</keyword>
<keyword id="KW-0539">Nucleus</keyword>
<keyword id="KW-1185">Reference proteome</keyword>
<evidence type="ECO:0000250" key="1">
    <source>
        <dbReference type="UniProtKB" id="Q9UYR9"/>
    </source>
</evidence>
<evidence type="ECO:0000255" key="2"/>
<evidence type="ECO:0000256" key="3">
    <source>
        <dbReference type="SAM" id="MobiDB-lite"/>
    </source>
</evidence>
<evidence type="ECO:0000269" key="4">
    <source>
    </source>
</evidence>
<evidence type="ECO:0000303" key="5">
    <source>
    </source>
</evidence>
<evidence type="ECO:0000305" key="6"/>
<evidence type="ECO:0000312" key="7">
    <source>
        <dbReference type="Araport" id="AT4G21800"/>
    </source>
</evidence>
<evidence type="ECO:0000312" key="8">
    <source>
        <dbReference type="EMBL" id="AEE84504.1"/>
    </source>
</evidence>
<evidence type="ECO:0000312" key="9">
    <source>
        <dbReference type="EMBL" id="CAA17147.1"/>
    </source>
</evidence>
<evidence type="ECO:0000312" key="10">
    <source>
        <dbReference type="EMBL" id="CAB81287.1"/>
    </source>
</evidence>
<evidence type="ECO:0007744" key="11">
    <source>
    </source>
</evidence>
<comment type="function">
    <text evidence="4">Small GTPase that is essential for the correct formation of the tangential divisions in early embryos. Associates with microtubule during mitosis and may function in the positioning of the division plane. May participate in the patterning of the early embryo at the octant-dermatogen transition.</text>
</comment>
<comment type="subunit">
    <text evidence="4">Heterodimer with QQT1.</text>
</comment>
<comment type="subcellular location">
    <subcellularLocation>
        <location evidence="4">Cytoplasm</location>
    </subcellularLocation>
    <subcellularLocation>
        <location evidence="4">Nucleus</location>
    </subcellularLocation>
    <subcellularLocation>
        <location evidence="4">Cytoplasm</location>
        <location evidence="4">Cytoskeleton</location>
        <location evidence="4">Spindle</location>
    </subcellularLocation>
    <subcellularLocation>
        <location evidence="4">Cytoplasm</location>
        <location evidence="4">Cytoskeleton</location>
        <location evidence="4">Phragmoplast</location>
    </subcellularLocation>
    <text evidence="4">During interphase, mainly expressed in the cytoplasm and weakly in the nucleus. Associated with microtubules during cell division.</text>
</comment>
<comment type="tissue specificity">
    <text evidence="4">Expressed in individual cells of roots, leaves and flowers.</text>
</comment>
<comment type="developmental stage">
    <text evidence="4">During embryogenesis, expressed in the embryo from octant to heart stage.</text>
</comment>
<comment type="disruption phenotype">
    <text evidence="4">Embryonic lethality due to embryo development arrest at the octant stage.</text>
</comment>
<comment type="similarity">
    <text evidence="6">Belongs to the GPN-loop GTPase family.</text>
</comment>
<comment type="sequence caution" evidence="6">
    <conflict type="erroneous gene model prediction">
        <sequence resource="EMBL-CDS" id="CAB36824"/>
    </conflict>
</comment>
<comment type="sequence caution" evidence="6">
    <conflict type="erroneous gene model prediction">
        <sequence resource="EMBL-CDS" id="CAB81287"/>
    </conflict>
</comment>
<accession>Q8W586</accession>
<accession>O49703</accession>
<accession>Q8L9E7</accession>
<accession>Q9SVR7</accession>
<name>QQT2_ARATH</name>
<protein>
    <recommendedName>
        <fullName evidence="6">GPN-loop GTPase QQT2</fullName>
        <ecNumber evidence="6">3.6.5.-</ecNumber>
    </recommendedName>
    <alternativeName>
        <fullName evidence="5">Protein QUATRE QUART 2</fullName>
    </alternativeName>
</protein>
<gene>
    <name evidence="5" type="primary">QQT2</name>
    <name evidence="8" type="synonym">quatre-quart2</name>
    <name evidence="7" type="ordered locus">At4g21800</name>
    <name evidence="10" type="ORF">F17L22.260</name>
    <name evidence="9" type="ORF">T8O5.10</name>
</gene>
<reference key="1">
    <citation type="journal article" date="1999" name="Nature">
        <title>Sequence and analysis of chromosome 4 of the plant Arabidopsis thaliana.</title>
        <authorList>
            <person name="Mayer K.F.X."/>
            <person name="Schueller C."/>
            <person name="Wambutt R."/>
            <person name="Murphy G."/>
            <person name="Volckaert G."/>
            <person name="Pohl T."/>
            <person name="Duesterhoeft A."/>
            <person name="Stiekema W."/>
            <person name="Entian K.-D."/>
            <person name="Terryn N."/>
            <person name="Harris B."/>
            <person name="Ansorge W."/>
            <person name="Brandt P."/>
            <person name="Grivell L.A."/>
            <person name="Rieger M."/>
            <person name="Weichselgartner M."/>
            <person name="de Simone V."/>
            <person name="Obermaier B."/>
            <person name="Mache R."/>
            <person name="Mueller M."/>
            <person name="Kreis M."/>
            <person name="Delseny M."/>
            <person name="Puigdomenech P."/>
            <person name="Watson M."/>
            <person name="Schmidtheini T."/>
            <person name="Reichert B."/>
            <person name="Portetelle D."/>
            <person name="Perez-Alonso M."/>
            <person name="Boutry M."/>
            <person name="Bancroft I."/>
            <person name="Vos P."/>
            <person name="Hoheisel J."/>
            <person name="Zimmermann W."/>
            <person name="Wedler H."/>
            <person name="Ridley P."/>
            <person name="Langham S.-A."/>
            <person name="McCullagh B."/>
            <person name="Bilham L."/>
            <person name="Robben J."/>
            <person name="van der Schueren J."/>
            <person name="Grymonprez B."/>
            <person name="Chuang Y.-J."/>
            <person name="Vandenbussche F."/>
            <person name="Braeken M."/>
            <person name="Weltjens I."/>
            <person name="Voet M."/>
            <person name="Bastiaens I."/>
            <person name="Aert R."/>
            <person name="Defoor E."/>
            <person name="Weitzenegger T."/>
            <person name="Bothe G."/>
            <person name="Ramsperger U."/>
            <person name="Hilbert H."/>
            <person name="Braun M."/>
            <person name="Holzer E."/>
            <person name="Brandt A."/>
            <person name="Peters S."/>
            <person name="van Staveren M."/>
            <person name="Dirkse W."/>
            <person name="Mooijman P."/>
            <person name="Klein Lankhorst R."/>
            <person name="Rose M."/>
            <person name="Hauf J."/>
            <person name="Koetter P."/>
            <person name="Berneiser S."/>
            <person name="Hempel S."/>
            <person name="Feldpausch M."/>
            <person name="Lamberth S."/>
            <person name="Van den Daele H."/>
            <person name="De Keyser A."/>
            <person name="Buysshaert C."/>
            <person name="Gielen J."/>
            <person name="Villarroel R."/>
            <person name="De Clercq R."/>
            <person name="van Montagu M."/>
            <person name="Rogers J."/>
            <person name="Cronin A."/>
            <person name="Quail M.A."/>
            <person name="Bray-Allen S."/>
            <person name="Clark L."/>
            <person name="Doggett J."/>
            <person name="Hall S."/>
            <person name="Kay M."/>
            <person name="Lennard N."/>
            <person name="McLay K."/>
            <person name="Mayes R."/>
            <person name="Pettett A."/>
            <person name="Rajandream M.A."/>
            <person name="Lyne M."/>
            <person name="Benes V."/>
            <person name="Rechmann S."/>
            <person name="Borkova D."/>
            <person name="Bloecker H."/>
            <person name="Scharfe M."/>
            <person name="Grimm M."/>
            <person name="Loehnert T.-H."/>
            <person name="Dose S."/>
            <person name="de Haan M."/>
            <person name="Maarse A.C."/>
            <person name="Schaefer M."/>
            <person name="Mueller-Auer S."/>
            <person name="Gabel C."/>
            <person name="Fuchs M."/>
            <person name="Fartmann B."/>
            <person name="Granderath K."/>
            <person name="Dauner D."/>
            <person name="Herzl A."/>
            <person name="Neumann S."/>
            <person name="Argiriou A."/>
            <person name="Vitale D."/>
            <person name="Liguori R."/>
            <person name="Piravandi E."/>
            <person name="Massenet O."/>
            <person name="Quigley F."/>
            <person name="Clabauld G."/>
            <person name="Muendlein A."/>
            <person name="Felber R."/>
            <person name="Schnabl S."/>
            <person name="Hiller R."/>
            <person name="Schmidt W."/>
            <person name="Lecharny A."/>
            <person name="Aubourg S."/>
            <person name="Chefdor F."/>
            <person name="Cooke R."/>
            <person name="Berger C."/>
            <person name="Monfort A."/>
            <person name="Casacuberta E."/>
            <person name="Gibbons T."/>
            <person name="Weber N."/>
            <person name="Vandenbol M."/>
            <person name="Bargues M."/>
            <person name="Terol J."/>
            <person name="Torres A."/>
            <person name="Perez-Perez A."/>
            <person name="Purnelle B."/>
            <person name="Bent E."/>
            <person name="Johnson S."/>
            <person name="Tacon D."/>
            <person name="Jesse T."/>
            <person name="Heijnen L."/>
            <person name="Schwarz S."/>
            <person name="Scholler P."/>
            <person name="Heber S."/>
            <person name="Francs P."/>
            <person name="Bielke C."/>
            <person name="Frishman D."/>
            <person name="Haase D."/>
            <person name="Lemcke K."/>
            <person name="Mewes H.-W."/>
            <person name="Stocker S."/>
            <person name="Zaccaria P."/>
            <person name="Bevan M."/>
            <person name="Wilson R.K."/>
            <person name="de la Bastide M."/>
            <person name="Habermann K."/>
            <person name="Parnell L."/>
            <person name="Dedhia N."/>
            <person name="Gnoj L."/>
            <person name="Schutz K."/>
            <person name="Huang E."/>
            <person name="Spiegel L."/>
            <person name="Sekhon M."/>
            <person name="Murray J."/>
            <person name="Sheet P."/>
            <person name="Cordes M."/>
            <person name="Abu-Threideh J."/>
            <person name="Stoneking T."/>
            <person name="Kalicki J."/>
            <person name="Graves T."/>
            <person name="Harmon G."/>
            <person name="Edwards J."/>
            <person name="Latreille P."/>
            <person name="Courtney L."/>
            <person name="Cloud J."/>
            <person name="Abbott A."/>
            <person name="Scott K."/>
            <person name="Johnson D."/>
            <person name="Minx P."/>
            <person name="Bentley D."/>
            <person name="Fulton B."/>
            <person name="Miller N."/>
            <person name="Greco T."/>
            <person name="Kemp K."/>
            <person name="Kramer J."/>
            <person name="Fulton L."/>
            <person name="Mardis E."/>
            <person name="Dante M."/>
            <person name="Pepin K."/>
            <person name="Hillier L.W."/>
            <person name="Nelson J."/>
            <person name="Spieth J."/>
            <person name="Ryan E."/>
            <person name="Andrews S."/>
            <person name="Geisel C."/>
            <person name="Layman D."/>
            <person name="Du H."/>
            <person name="Ali J."/>
            <person name="Berghoff A."/>
            <person name="Jones K."/>
            <person name="Drone K."/>
            <person name="Cotton M."/>
            <person name="Joshu C."/>
            <person name="Antonoiu B."/>
            <person name="Zidanic M."/>
            <person name="Strong C."/>
            <person name="Sun H."/>
            <person name="Lamar B."/>
            <person name="Yordan C."/>
            <person name="Ma P."/>
            <person name="Zhong J."/>
            <person name="Preston R."/>
            <person name="Vil D."/>
            <person name="Shekher M."/>
            <person name="Matero A."/>
            <person name="Shah R."/>
            <person name="Swaby I.K."/>
            <person name="O'Shaughnessy A."/>
            <person name="Rodriguez M."/>
            <person name="Hoffman J."/>
            <person name="Till S."/>
            <person name="Granat S."/>
            <person name="Shohdy N."/>
            <person name="Hasegawa A."/>
            <person name="Hameed A."/>
            <person name="Lodhi M."/>
            <person name="Johnson A."/>
            <person name="Chen E."/>
            <person name="Marra M.A."/>
            <person name="Martienssen R."/>
            <person name="McCombie W.R."/>
        </authorList>
    </citation>
    <scope>NUCLEOTIDE SEQUENCE [LARGE SCALE GENOMIC DNA]</scope>
    <source>
        <strain>cv. Columbia</strain>
    </source>
</reference>
<reference key="2">
    <citation type="journal article" date="2017" name="Plant J.">
        <title>Araport11: a complete reannotation of the Arabidopsis thaliana reference genome.</title>
        <authorList>
            <person name="Cheng C.Y."/>
            <person name="Krishnakumar V."/>
            <person name="Chan A.P."/>
            <person name="Thibaud-Nissen F."/>
            <person name="Schobel S."/>
            <person name="Town C.D."/>
        </authorList>
    </citation>
    <scope>GENOME REANNOTATION</scope>
    <source>
        <strain>cv. Columbia</strain>
    </source>
</reference>
<reference key="3">
    <citation type="journal article" date="2003" name="Science">
        <title>Empirical analysis of transcriptional activity in the Arabidopsis genome.</title>
        <authorList>
            <person name="Yamada K."/>
            <person name="Lim J."/>
            <person name="Dale J.M."/>
            <person name="Chen H."/>
            <person name="Shinn P."/>
            <person name="Palm C.J."/>
            <person name="Southwick A.M."/>
            <person name="Wu H.C."/>
            <person name="Kim C.J."/>
            <person name="Nguyen M."/>
            <person name="Pham P.K."/>
            <person name="Cheuk R.F."/>
            <person name="Karlin-Newmann G."/>
            <person name="Liu S.X."/>
            <person name="Lam B."/>
            <person name="Sakano H."/>
            <person name="Wu T."/>
            <person name="Yu G."/>
            <person name="Miranda M."/>
            <person name="Quach H.L."/>
            <person name="Tripp M."/>
            <person name="Chang C.H."/>
            <person name="Lee J.M."/>
            <person name="Toriumi M.J."/>
            <person name="Chan M.M."/>
            <person name="Tang C.C."/>
            <person name="Onodera C.S."/>
            <person name="Deng J.M."/>
            <person name="Akiyama K."/>
            <person name="Ansari Y."/>
            <person name="Arakawa T."/>
            <person name="Banh J."/>
            <person name="Banno F."/>
            <person name="Bowser L."/>
            <person name="Brooks S.Y."/>
            <person name="Carninci P."/>
            <person name="Chao Q."/>
            <person name="Choy N."/>
            <person name="Enju A."/>
            <person name="Goldsmith A.D."/>
            <person name="Gurjal M."/>
            <person name="Hansen N.F."/>
            <person name="Hayashizaki Y."/>
            <person name="Johnson-Hopson C."/>
            <person name="Hsuan V.W."/>
            <person name="Iida K."/>
            <person name="Karnes M."/>
            <person name="Khan S."/>
            <person name="Koesema E."/>
            <person name="Ishida J."/>
            <person name="Jiang P.X."/>
            <person name="Jones T."/>
            <person name="Kawai J."/>
            <person name="Kamiya A."/>
            <person name="Meyers C."/>
            <person name="Nakajima M."/>
            <person name="Narusaka M."/>
            <person name="Seki M."/>
            <person name="Sakurai T."/>
            <person name="Satou M."/>
            <person name="Tamse R."/>
            <person name="Vaysberg M."/>
            <person name="Wallender E.K."/>
            <person name="Wong C."/>
            <person name="Yamamura Y."/>
            <person name="Yuan S."/>
            <person name="Shinozaki K."/>
            <person name="Davis R.W."/>
            <person name="Theologis A."/>
            <person name="Ecker J.R."/>
        </authorList>
    </citation>
    <scope>NUCLEOTIDE SEQUENCE [LARGE SCALE MRNA]</scope>
    <source>
        <strain>cv. Columbia</strain>
    </source>
</reference>
<reference key="4">
    <citation type="submission" date="2002-03" db="EMBL/GenBank/DDBJ databases">
        <title>Full-length cDNA from Arabidopsis thaliana.</title>
        <authorList>
            <person name="Brover V.V."/>
            <person name="Troukhan M.E."/>
            <person name="Alexandrov N.A."/>
            <person name="Lu Y.-P."/>
            <person name="Flavell R.B."/>
            <person name="Feldmann K.A."/>
        </authorList>
    </citation>
    <scope>NUCLEOTIDE SEQUENCE [LARGE SCALE MRNA]</scope>
</reference>
<reference key="5">
    <citation type="journal article" date="2007" name="Plant J.">
        <title>QQT proteins colocalize with microtubules and are essential for early embryo development in Arabidopsis.</title>
        <authorList>
            <person name="Lahmy S."/>
            <person name="Guilleminot J."/>
            <person name="Schmit A.C."/>
            <person name="Pelletier G."/>
            <person name="Chaboute M.E."/>
            <person name="Devic M."/>
        </authorList>
    </citation>
    <scope>FUNCTION</scope>
    <scope>INTERACTION WITH QQT1</scope>
    <scope>TISSUE SPECIFICITY</scope>
    <scope>DEVELOPMENTAL STAGE</scope>
    <scope>DISRUPTION PHENOTYPE</scope>
</reference>
<reference key="6">
    <citation type="journal article" date="2012" name="Mol. Cell. Proteomics">
        <title>Comparative large-scale characterisation of plant vs. mammal proteins reveals similar and idiosyncratic N-alpha acetylation features.</title>
        <authorList>
            <person name="Bienvenut W.V."/>
            <person name="Sumpton D."/>
            <person name="Martinez A."/>
            <person name="Lilla S."/>
            <person name="Espagne C."/>
            <person name="Meinnel T."/>
            <person name="Giglione C."/>
        </authorList>
    </citation>
    <scope>ACETYLATION [LARGE SCALE ANALYSIS] AT MET-1</scope>
    <scope>IDENTIFICATION BY MASS SPECTROMETRY [LARGE SCALE ANALYSIS]</scope>
</reference>
<proteinExistence type="evidence at protein level"/>